<keyword id="KW-1015">Disulfide bond</keyword>
<keyword id="KW-1185">Reference proteome</keyword>
<keyword id="KW-0677">Repeat</keyword>
<keyword id="KW-0732">Signal</keyword>
<organism>
    <name type="scientific">Caenorhabditis elegans</name>
    <dbReference type="NCBI Taxonomy" id="6239"/>
    <lineage>
        <taxon>Eukaryota</taxon>
        <taxon>Metazoa</taxon>
        <taxon>Ecdysozoa</taxon>
        <taxon>Nematoda</taxon>
        <taxon>Chromadorea</taxon>
        <taxon>Rhabditida</taxon>
        <taxon>Rhabditina</taxon>
        <taxon>Rhabditomorpha</taxon>
        <taxon>Rhabditoidea</taxon>
        <taxon>Rhabditidae</taxon>
        <taxon>Peloderinae</taxon>
        <taxon>Caenorhabditis</taxon>
    </lineage>
</organism>
<dbReference type="EMBL" id="Z48585">
    <property type="protein sequence ID" value="CAA88486.1"/>
    <property type="molecule type" value="Genomic_DNA"/>
</dbReference>
<dbReference type="PIR" id="T27967">
    <property type="entry name" value="T27967"/>
</dbReference>
<dbReference type="RefSeq" id="NP_001254248.1">
    <property type="nucleotide sequence ID" value="NM_001267319.3"/>
</dbReference>
<dbReference type="SMR" id="Q09662"/>
<dbReference type="FunCoup" id="Q09662">
    <property type="interactions" value="2"/>
</dbReference>
<dbReference type="PaxDb" id="6239-ZK673.1a"/>
<dbReference type="PeptideAtlas" id="Q09662"/>
<dbReference type="EnsemblMetazoa" id="ZK673.1a.1">
    <property type="protein sequence ID" value="ZK673.1a.1"/>
    <property type="gene ID" value="WBGene00014057"/>
</dbReference>
<dbReference type="GeneID" id="174607"/>
<dbReference type="KEGG" id="cel:CELE_ZK673.1"/>
<dbReference type="UCSC" id="ZK673.1">
    <property type="organism name" value="c. elegans"/>
</dbReference>
<dbReference type="AGR" id="WB:WBGene00014057"/>
<dbReference type="CTD" id="174607"/>
<dbReference type="WormBase" id="ZK673.1a">
    <property type="protein sequence ID" value="CE16742"/>
    <property type="gene ID" value="WBGene00014057"/>
</dbReference>
<dbReference type="eggNOG" id="ENOG502SXB8">
    <property type="taxonomic scope" value="Eukaryota"/>
</dbReference>
<dbReference type="GeneTree" id="ENSGT00970000195829"/>
<dbReference type="HOGENOM" id="CLU_1705839_0_0_1"/>
<dbReference type="InParanoid" id="Q09662"/>
<dbReference type="OMA" id="LQQFCPK"/>
<dbReference type="OrthoDB" id="5825018at2759"/>
<dbReference type="PRO" id="PR:Q09662"/>
<dbReference type="Proteomes" id="UP000001940">
    <property type="component" value="Chromosome II"/>
</dbReference>
<dbReference type="Bgee" id="WBGene00014057">
    <property type="expression patterns" value="Expressed in larva and 2 other cell types or tissues"/>
</dbReference>
<dbReference type="ExpressionAtlas" id="Q09662">
    <property type="expression patterns" value="baseline and differential"/>
</dbReference>
<dbReference type="GO" id="GO:0045087">
    <property type="term" value="P:innate immune response"/>
    <property type="evidence" value="ECO:0000318"/>
    <property type="project" value="GO_Central"/>
</dbReference>
<dbReference type="FunFam" id="1.10.10.1940:FF:000002">
    <property type="entry name" value="PHAryngeal gland Toxin-related"/>
    <property type="match status" value="1"/>
</dbReference>
<dbReference type="Gene3D" id="1.10.10.1940">
    <property type="match status" value="2"/>
</dbReference>
<dbReference type="InterPro" id="IPR003582">
    <property type="entry name" value="ShKT_dom"/>
</dbReference>
<dbReference type="PANTHER" id="PTHR21724">
    <property type="entry name" value="SHKT DOMAIN-CONTAINING PROTEIN"/>
    <property type="match status" value="1"/>
</dbReference>
<dbReference type="PANTHER" id="PTHR21724:SF108">
    <property type="entry name" value="SHKT DOMAIN-CONTAINING PROTEIN"/>
    <property type="match status" value="1"/>
</dbReference>
<dbReference type="Pfam" id="PF01549">
    <property type="entry name" value="ShK"/>
    <property type="match status" value="2"/>
</dbReference>
<dbReference type="SMART" id="SM00254">
    <property type="entry name" value="ShKT"/>
    <property type="match status" value="2"/>
</dbReference>
<dbReference type="PROSITE" id="PS51670">
    <property type="entry name" value="SHKT"/>
    <property type="match status" value="2"/>
</dbReference>
<evidence type="ECO:0000255" key="1"/>
<evidence type="ECO:0000255" key="2">
    <source>
        <dbReference type="PROSITE-ProRule" id="PRU01005"/>
    </source>
</evidence>
<feature type="signal peptide" evidence="1">
    <location>
        <begin position="1"/>
        <end position="19"/>
    </location>
</feature>
<feature type="chain" id="PRO_0000014305" description="Uncharacterized protein ZK673.1">
    <location>
        <begin position="20"/>
        <end position="154"/>
    </location>
</feature>
<feature type="domain" description="ShKT 1" evidence="2">
    <location>
        <begin position="67"/>
        <end position="102"/>
    </location>
</feature>
<feature type="domain" description="ShKT 2" evidence="2">
    <location>
        <begin position="113"/>
        <end position="150"/>
    </location>
</feature>
<feature type="disulfide bond" evidence="2">
    <location>
        <begin position="67"/>
        <end position="102"/>
    </location>
</feature>
<feature type="disulfide bond" evidence="2">
    <location>
        <begin position="75"/>
        <end position="95"/>
    </location>
</feature>
<feature type="disulfide bond" evidence="2">
    <location>
        <begin position="82"/>
        <end position="99"/>
    </location>
</feature>
<feature type="disulfide bond" evidence="2">
    <location>
        <begin position="113"/>
        <end position="150"/>
    </location>
</feature>
<feature type="disulfide bond" evidence="2">
    <location>
        <begin position="120"/>
        <end position="143"/>
    </location>
</feature>
<feature type="disulfide bond" evidence="2">
    <location>
        <begin position="129"/>
        <end position="147"/>
    </location>
</feature>
<reference key="1">
    <citation type="journal article" date="1998" name="Science">
        <title>Genome sequence of the nematode C. elegans: a platform for investigating biology.</title>
        <authorList>
            <consortium name="The C. elegans sequencing consortium"/>
        </authorList>
    </citation>
    <scope>NUCLEOTIDE SEQUENCE [LARGE SCALE GENOMIC DNA]</scope>
    <source>
        <strain>Bristol N2</strain>
    </source>
</reference>
<proteinExistence type="inferred from homology"/>
<accession>Q09662</accession>
<protein>
    <recommendedName>
        <fullName>Uncharacterized protein ZK673.1</fullName>
    </recommendedName>
</protein>
<sequence length="154" mass="15637">MWSLKSTLCIALLVTYSVAQDSTTVDTTAATTATGGTTATGGTTATGGTTVSGATTAASGATTASTCADDPNTDCTQYTSLCSNAKYTPLLQQFCPKTCGFCGGGSTAAPVQCVDSSTNCANWEKNGFCSSTFYDCANKKQYCAKTCKLCTTTC</sequence>
<gene>
    <name type="ORF">ZK673.1</name>
</gene>
<name>YS51_CAEEL</name>